<gene>
    <name evidence="1" type="primary">dnaA</name>
    <name type="ordered locus">lpl0001</name>
</gene>
<proteinExistence type="inferred from homology"/>
<comment type="function">
    <text evidence="1">Plays an essential role in the initiation and regulation of chromosomal replication. ATP-DnaA binds to the origin of replication (oriC) to initiate formation of the DNA replication initiation complex once per cell cycle. Binds the DnaA box (a 9 base pair repeat at the origin) and separates the double-stranded (ds)DNA. Forms a right-handed helical filament on oriC DNA; dsDNA binds to the exterior of the filament while single-stranded (ss)DNA is stabiized in the filament's interior. The ATP-DnaA-oriC complex binds and stabilizes one strand of the AT-rich DNA unwinding element (DUE), permitting loading of DNA polymerase. After initiation quickly degrades to an ADP-DnaA complex that is not apt for DNA replication. Binds acidic phospholipids.</text>
</comment>
<comment type="subunit">
    <text evidence="1">Oligomerizes as a right-handed, spiral filament on DNA at oriC.</text>
</comment>
<comment type="subcellular location">
    <subcellularLocation>
        <location evidence="1">Cytoplasm</location>
    </subcellularLocation>
</comment>
<comment type="domain">
    <text evidence="1">Domain I is involved in oligomerization and binding regulators, domain II is flexibile and of varying length in different bacteria, domain III forms the AAA+ region, while domain IV binds dsDNA.</text>
</comment>
<comment type="similarity">
    <text evidence="1">Belongs to the DnaA family.</text>
</comment>
<sequence length="452" mass="51380">MSTTAWQKCLGLLQDEFSAQQFNTWLRPLQAYMDEQRLILLAPNRFVVDWVRKHFFSRIEELIKQFSGDDIKAISIEVGSKPVEAVDTPAETIVTSSSTAPLKSAPKKAVDYKSSHLNKKFVFDSFVEGNSNQLARAASMQVAERPGDAYNPLFIYGGVGLGKTHLMHAIGNSILKNNPEAKVLYLHSERFVADMVKALQTNSINEFKRFYRSLNALLIDDIQFFAGKDRSQEEFFHTFNALLEGQQQIILTSDRYPKEIEGMEERLKSRFGWGLTVAVEPPELETRVAILISKAEQSNIELPYEVAFFIAKRIRSNVRELEGALRRVIANAHFTGKPITIEFVHEALRDLLALQDKLVTIENIQKTVAEYYKVKVADLLSKRRSRSIARPRQMAMALSKELTNHSLPEIGDHFGGKDHTTVIHACRKVKELIQDDSDFAEDYKNLMRILSS</sequence>
<feature type="chain" id="PRO_0000114197" description="Chromosomal replication initiator protein DnaA">
    <location>
        <begin position="1"/>
        <end position="452"/>
    </location>
</feature>
<feature type="region of interest" description="Domain I, interacts with DnaA modulators" evidence="1">
    <location>
        <begin position="1"/>
        <end position="85"/>
    </location>
</feature>
<feature type="region of interest" description="Domain II" evidence="1">
    <location>
        <begin position="85"/>
        <end position="115"/>
    </location>
</feature>
<feature type="region of interest" description="Domain III, AAA+ region" evidence="1">
    <location>
        <begin position="116"/>
        <end position="332"/>
    </location>
</feature>
<feature type="region of interest" description="Domain IV, binds dsDNA" evidence="1">
    <location>
        <begin position="333"/>
        <end position="452"/>
    </location>
</feature>
<feature type="binding site" evidence="1">
    <location>
        <position position="160"/>
    </location>
    <ligand>
        <name>ATP</name>
        <dbReference type="ChEBI" id="CHEBI:30616"/>
    </ligand>
</feature>
<feature type="binding site" evidence="1">
    <location>
        <position position="162"/>
    </location>
    <ligand>
        <name>ATP</name>
        <dbReference type="ChEBI" id="CHEBI:30616"/>
    </ligand>
</feature>
<feature type="binding site" evidence="1">
    <location>
        <position position="163"/>
    </location>
    <ligand>
        <name>ATP</name>
        <dbReference type="ChEBI" id="CHEBI:30616"/>
    </ligand>
</feature>
<feature type="binding site" evidence="1">
    <location>
        <position position="164"/>
    </location>
    <ligand>
        <name>ATP</name>
        <dbReference type="ChEBI" id="CHEBI:30616"/>
    </ligand>
</feature>
<accession>Q5X0L8</accession>
<keyword id="KW-0067">ATP-binding</keyword>
<keyword id="KW-0963">Cytoplasm</keyword>
<keyword id="KW-0235">DNA replication</keyword>
<keyword id="KW-0238">DNA-binding</keyword>
<keyword id="KW-0446">Lipid-binding</keyword>
<keyword id="KW-0547">Nucleotide-binding</keyword>
<dbReference type="EMBL" id="CR628337">
    <property type="protein sequence ID" value="CAH14231.1"/>
    <property type="molecule type" value="Genomic_DNA"/>
</dbReference>
<dbReference type="RefSeq" id="WP_010945763.1">
    <property type="nucleotide sequence ID" value="NC_006369.1"/>
</dbReference>
<dbReference type="SMR" id="Q5X0L8"/>
<dbReference type="GeneID" id="57034007"/>
<dbReference type="KEGG" id="lpf:lpl0001"/>
<dbReference type="LegioList" id="lpl0001"/>
<dbReference type="HOGENOM" id="CLU_026910_0_1_6"/>
<dbReference type="Proteomes" id="UP000002517">
    <property type="component" value="Chromosome"/>
</dbReference>
<dbReference type="GO" id="GO:0005737">
    <property type="term" value="C:cytoplasm"/>
    <property type="evidence" value="ECO:0007669"/>
    <property type="project" value="UniProtKB-SubCell"/>
</dbReference>
<dbReference type="GO" id="GO:0005886">
    <property type="term" value="C:plasma membrane"/>
    <property type="evidence" value="ECO:0007669"/>
    <property type="project" value="TreeGrafter"/>
</dbReference>
<dbReference type="GO" id="GO:0005524">
    <property type="term" value="F:ATP binding"/>
    <property type="evidence" value="ECO:0007669"/>
    <property type="project" value="UniProtKB-UniRule"/>
</dbReference>
<dbReference type="GO" id="GO:0016887">
    <property type="term" value="F:ATP hydrolysis activity"/>
    <property type="evidence" value="ECO:0007669"/>
    <property type="project" value="InterPro"/>
</dbReference>
<dbReference type="GO" id="GO:0003688">
    <property type="term" value="F:DNA replication origin binding"/>
    <property type="evidence" value="ECO:0007669"/>
    <property type="project" value="UniProtKB-UniRule"/>
</dbReference>
<dbReference type="GO" id="GO:0008289">
    <property type="term" value="F:lipid binding"/>
    <property type="evidence" value="ECO:0007669"/>
    <property type="project" value="UniProtKB-KW"/>
</dbReference>
<dbReference type="GO" id="GO:0006270">
    <property type="term" value="P:DNA replication initiation"/>
    <property type="evidence" value="ECO:0007669"/>
    <property type="project" value="UniProtKB-UniRule"/>
</dbReference>
<dbReference type="GO" id="GO:0006275">
    <property type="term" value="P:regulation of DNA replication"/>
    <property type="evidence" value="ECO:0007669"/>
    <property type="project" value="UniProtKB-UniRule"/>
</dbReference>
<dbReference type="CDD" id="cd00009">
    <property type="entry name" value="AAA"/>
    <property type="match status" value="1"/>
</dbReference>
<dbReference type="CDD" id="cd06571">
    <property type="entry name" value="Bac_DnaA_C"/>
    <property type="match status" value="1"/>
</dbReference>
<dbReference type="FunFam" id="1.10.1750.10:FF:000001">
    <property type="entry name" value="Chromosomal replication initiator protein DnaA"/>
    <property type="match status" value="1"/>
</dbReference>
<dbReference type="FunFam" id="1.10.8.60:FF:000003">
    <property type="entry name" value="Chromosomal replication initiator protein DnaA"/>
    <property type="match status" value="1"/>
</dbReference>
<dbReference type="FunFam" id="3.40.50.300:FF:000103">
    <property type="entry name" value="Chromosomal replication initiator protein DnaA"/>
    <property type="match status" value="1"/>
</dbReference>
<dbReference type="Gene3D" id="1.10.1750.10">
    <property type="match status" value="1"/>
</dbReference>
<dbReference type="Gene3D" id="1.10.8.60">
    <property type="match status" value="1"/>
</dbReference>
<dbReference type="Gene3D" id="3.30.300.180">
    <property type="match status" value="1"/>
</dbReference>
<dbReference type="Gene3D" id="3.40.50.300">
    <property type="entry name" value="P-loop containing nucleotide triphosphate hydrolases"/>
    <property type="match status" value="1"/>
</dbReference>
<dbReference type="HAMAP" id="MF_00377">
    <property type="entry name" value="DnaA_bact"/>
    <property type="match status" value="1"/>
</dbReference>
<dbReference type="InterPro" id="IPR003593">
    <property type="entry name" value="AAA+_ATPase"/>
</dbReference>
<dbReference type="InterPro" id="IPR001957">
    <property type="entry name" value="Chromosome_initiator_DnaA"/>
</dbReference>
<dbReference type="InterPro" id="IPR020591">
    <property type="entry name" value="Chromosome_initiator_DnaA-like"/>
</dbReference>
<dbReference type="InterPro" id="IPR018312">
    <property type="entry name" value="Chromosome_initiator_DnaA_CS"/>
</dbReference>
<dbReference type="InterPro" id="IPR013159">
    <property type="entry name" value="DnaA_C"/>
</dbReference>
<dbReference type="InterPro" id="IPR013317">
    <property type="entry name" value="DnaA_dom"/>
</dbReference>
<dbReference type="InterPro" id="IPR024633">
    <property type="entry name" value="DnaA_N_dom"/>
</dbReference>
<dbReference type="InterPro" id="IPR038454">
    <property type="entry name" value="DnaA_N_sf"/>
</dbReference>
<dbReference type="InterPro" id="IPR027417">
    <property type="entry name" value="P-loop_NTPase"/>
</dbReference>
<dbReference type="InterPro" id="IPR010921">
    <property type="entry name" value="Trp_repressor/repl_initiator"/>
</dbReference>
<dbReference type="NCBIfam" id="TIGR00362">
    <property type="entry name" value="DnaA"/>
    <property type="match status" value="1"/>
</dbReference>
<dbReference type="PANTHER" id="PTHR30050">
    <property type="entry name" value="CHROMOSOMAL REPLICATION INITIATOR PROTEIN DNAA"/>
    <property type="match status" value="1"/>
</dbReference>
<dbReference type="PANTHER" id="PTHR30050:SF2">
    <property type="entry name" value="CHROMOSOMAL REPLICATION INITIATOR PROTEIN DNAA"/>
    <property type="match status" value="1"/>
</dbReference>
<dbReference type="Pfam" id="PF00308">
    <property type="entry name" value="Bac_DnaA"/>
    <property type="match status" value="1"/>
</dbReference>
<dbReference type="Pfam" id="PF08299">
    <property type="entry name" value="Bac_DnaA_C"/>
    <property type="match status" value="1"/>
</dbReference>
<dbReference type="Pfam" id="PF11638">
    <property type="entry name" value="DnaA_N"/>
    <property type="match status" value="1"/>
</dbReference>
<dbReference type="PRINTS" id="PR00051">
    <property type="entry name" value="DNAA"/>
</dbReference>
<dbReference type="SMART" id="SM00382">
    <property type="entry name" value="AAA"/>
    <property type="match status" value="1"/>
</dbReference>
<dbReference type="SMART" id="SM00760">
    <property type="entry name" value="Bac_DnaA_C"/>
    <property type="match status" value="1"/>
</dbReference>
<dbReference type="SUPFAM" id="SSF52540">
    <property type="entry name" value="P-loop containing nucleoside triphosphate hydrolases"/>
    <property type="match status" value="1"/>
</dbReference>
<dbReference type="SUPFAM" id="SSF48295">
    <property type="entry name" value="TrpR-like"/>
    <property type="match status" value="1"/>
</dbReference>
<dbReference type="PROSITE" id="PS01008">
    <property type="entry name" value="DNAA"/>
    <property type="match status" value="1"/>
</dbReference>
<reference key="1">
    <citation type="journal article" date="2004" name="Nat. Genet.">
        <title>Evidence in the Legionella pneumophila genome for exploitation of host cell functions and high genome plasticity.</title>
        <authorList>
            <person name="Cazalet C."/>
            <person name="Rusniok C."/>
            <person name="Brueggemann H."/>
            <person name="Zidane N."/>
            <person name="Magnier A."/>
            <person name="Ma L."/>
            <person name="Tichit M."/>
            <person name="Jarraud S."/>
            <person name="Bouchier C."/>
            <person name="Vandenesch F."/>
            <person name="Kunst F."/>
            <person name="Etienne J."/>
            <person name="Glaser P."/>
            <person name="Buchrieser C."/>
        </authorList>
    </citation>
    <scope>NUCLEOTIDE SEQUENCE [LARGE SCALE GENOMIC DNA]</scope>
    <source>
        <strain>Lens</strain>
    </source>
</reference>
<evidence type="ECO:0000255" key="1">
    <source>
        <dbReference type="HAMAP-Rule" id="MF_00377"/>
    </source>
</evidence>
<name>DNAA_LEGPL</name>
<protein>
    <recommendedName>
        <fullName evidence="1">Chromosomal replication initiator protein DnaA</fullName>
    </recommendedName>
</protein>
<organism>
    <name type="scientific">Legionella pneumophila (strain Lens)</name>
    <dbReference type="NCBI Taxonomy" id="297245"/>
    <lineage>
        <taxon>Bacteria</taxon>
        <taxon>Pseudomonadati</taxon>
        <taxon>Pseudomonadota</taxon>
        <taxon>Gammaproteobacteria</taxon>
        <taxon>Legionellales</taxon>
        <taxon>Legionellaceae</taxon>
        <taxon>Legionella</taxon>
    </lineage>
</organism>